<organism>
    <name type="scientific">Frankia casuarinae (strain DSM 45818 / CECT 9043 / HFP020203 / CcI3)</name>
    <dbReference type="NCBI Taxonomy" id="106370"/>
    <lineage>
        <taxon>Bacteria</taxon>
        <taxon>Bacillati</taxon>
        <taxon>Actinomycetota</taxon>
        <taxon>Actinomycetes</taxon>
        <taxon>Frankiales</taxon>
        <taxon>Frankiaceae</taxon>
        <taxon>Frankia</taxon>
    </lineage>
</organism>
<feature type="chain" id="PRO_1000009219" description="UPF0102 protein Francci3_3586">
    <location>
        <begin position="1"/>
        <end position="118"/>
    </location>
</feature>
<reference key="1">
    <citation type="journal article" date="2007" name="Genome Res.">
        <title>Genome characteristics of facultatively symbiotic Frankia sp. strains reflect host range and host plant biogeography.</title>
        <authorList>
            <person name="Normand P."/>
            <person name="Lapierre P."/>
            <person name="Tisa L.S."/>
            <person name="Gogarten J.P."/>
            <person name="Alloisio N."/>
            <person name="Bagnarol E."/>
            <person name="Bassi C.A."/>
            <person name="Berry A.M."/>
            <person name="Bickhart D.M."/>
            <person name="Choisne N."/>
            <person name="Couloux A."/>
            <person name="Cournoyer B."/>
            <person name="Cruveiller S."/>
            <person name="Daubin V."/>
            <person name="Demange N."/>
            <person name="Francino M.P."/>
            <person name="Goltsman E."/>
            <person name="Huang Y."/>
            <person name="Kopp O.R."/>
            <person name="Labarre L."/>
            <person name="Lapidus A."/>
            <person name="Lavire C."/>
            <person name="Marechal J."/>
            <person name="Martinez M."/>
            <person name="Mastronunzio J.E."/>
            <person name="Mullin B.C."/>
            <person name="Niemann J."/>
            <person name="Pujic P."/>
            <person name="Rawnsley T."/>
            <person name="Rouy Z."/>
            <person name="Schenowitz C."/>
            <person name="Sellstedt A."/>
            <person name="Tavares F."/>
            <person name="Tomkins J.P."/>
            <person name="Vallenet D."/>
            <person name="Valverde C."/>
            <person name="Wall L.G."/>
            <person name="Wang Y."/>
            <person name="Medigue C."/>
            <person name="Benson D.R."/>
        </authorList>
    </citation>
    <scope>NUCLEOTIDE SEQUENCE [LARGE SCALE GENOMIC DNA]</scope>
    <source>
        <strain>DSM 45818 / CECT 9043 / HFP020203 / CcI3</strain>
    </source>
</reference>
<accession>Q2J704</accession>
<keyword id="KW-1185">Reference proteome</keyword>
<proteinExistence type="inferred from homology"/>
<comment type="similarity">
    <text evidence="1">Belongs to the UPF0102 family.</text>
</comment>
<name>Y3586_FRACC</name>
<protein>
    <recommendedName>
        <fullName evidence="1">UPF0102 protein Francci3_3586</fullName>
    </recommendedName>
</protein>
<sequence length="118" mass="13019">MRAKDALGRFGEDVAARHLAAVGAEILDRNWRCREGELDLVVQDGESLVFCEVKTRSGTRYGSAAEAVVGRKAARIRRLAARWLAEHPHASSLVRFDVLLVSRPSTGPVRVEHIRGAF</sequence>
<dbReference type="EMBL" id="CP000249">
    <property type="protein sequence ID" value="ABD12938.1"/>
    <property type="molecule type" value="Genomic_DNA"/>
</dbReference>
<dbReference type="RefSeq" id="WP_011437962.1">
    <property type="nucleotide sequence ID" value="NZ_JENI01000005.1"/>
</dbReference>
<dbReference type="SMR" id="Q2J704"/>
<dbReference type="STRING" id="106370.Francci3_3586"/>
<dbReference type="KEGG" id="fra:Francci3_3586"/>
<dbReference type="eggNOG" id="COG0792">
    <property type="taxonomic scope" value="Bacteria"/>
</dbReference>
<dbReference type="HOGENOM" id="CLU_115353_2_3_11"/>
<dbReference type="OrthoDB" id="9794876at2"/>
<dbReference type="PhylomeDB" id="Q2J704"/>
<dbReference type="Proteomes" id="UP000001937">
    <property type="component" value="Chromosome"/>
</dbReference>
<dbReference type="GO" id="GO:0003676">
    <property type="term" value="F:nucleic acid binding"/>
    <property type="evidence" value="ECO:0007669"/>
    <property type="project" value="InterPro"/>
</dbReference>
<dbReference type="CDD" id="cd20736">
    <property type="entry name" value="PoNe_Nuclease"/>
    <property type="match status" value="1"/>
</dbReference>
<dbReference type="Gene3D" id="3.40.1350.10">
    <property type="match status" value="1"/>
</dbReference>
<dbReference type="HAMAP" id="MF_00048">
    <property type="entry name" value="UPF0102"/>
    <property type="match status" value="1"/>
</dbReference>
<dbReference type="InterPro" id="IPR011335">
    <property type="entry name" value="Restrct_endonuc-II-like"/>
</dbReference>
<dbReference type="InterPro" id="IPR011856">
    <property type="entry name" value="tRNA_endonuc-like_dom_sf"/>
</dbReference>
<dbReference type="InterPro" id="IPR003509">
    <property type="entry name" value="UPF0102_YraN-like"/>
</dbReference>
<dbReference type="NCBIfam" id="NF009150">
    <property type="entry name" value="PRK12497.1-3"/>
    <property type="match status" value="1"/>
</dbReference>
<dbReference type="NCBIfam" id="NF009154">
    <property type="entry name" value="PRK12497.3-3"/>
    <property type="match status" value="1"/>
</dbReference>
<dbReference type="NCBIfam" id="TIGR00252">
    <property type="entry name" value="YraN family protein"/>
    <property type="match status" value="1"/>
</dbReference>
<dbReference type="PANTHER" id="PTHR34039">
    <property type="entry name" value="UPF0102 PROTEIN YRAN"/>
    <property type="match status" value="1"/>
</dbReference>
<dbReference type="PANTHER" id="PTHR34039:SF1">
    <property type="entry name" value="UPF0102 PROTEIN YRAN"/>
    <property type="match status" value="1"/>
</dbReference>
<dbReference type="Pfam" id="PF02021">
    <property type="entry name" value="UPF0102"/>
    <property type="match status" value="1"/>
</dbReference>
<dbReference type="SUPFAM" id="SSF52980">
    <property type="entry name" value="Restriction endonuclease-like"/>
    <property type="match status" value="1"/>
</dbReference>
<gene>
    <name type="ordered locus">Francci3_3586</name>
</gene>
<evidence type="ECO:0000255" key="1">
    <source>
        <dbReference type="HAMAP-Rule" id="MF_00048"/>
    </source>
</evidence>